<gene>
    <name evidence="1" type="primary">cysS</name>
    <name type="ordered locus">Oant_2611</name>
</gene>
<accession>A6X270</accession>
<name>SYC_BRUA4</name>
<proteinExistence type="inferred from homology"/>
<sequence length="505" mass="56738">MAYAPQLRLYNTLTRMKEEFSPLDADNVRMYVCGPTVYDFAHIGNARPVIVFDVLFRLLRHVYGAEHVTYARNITDVDDKINARAARDYPDLAFNEAIRRVTESTNAQFQADVTALGNLQPSVQPRATEHMDEMRAMIDRLVKLGVAYVAEDHVLFSPSAMNERKGPRYGALARRSLDEMLAGARVDVASYKRDEMDFVLWKPSKEGEPGWSSPAGIAVLGRPGWHIECSAMSMAKLLEPFGGGLKCDDPLKNQFDIHGGGIDLVFPHHENEIAQSCCAFGTERMANIWMHNGFLQVEGQKMSKSLGNFITIRDVLNEGLPQLGVWDDVDARDRWIGLAARLSMLQTHYREPINWTAQRLAESADELHRWYGLLRDRKFTVPETLTAVGEVVEALSDDLNSWTAITALRKAFKARDITGLGEGMALLGLLDPHFVMAEDIPVFAKAEVDHQAIEARIAERLRFINEKNWAEADRIRDELLQEGVQLKDGKDPATGERTTSWDVVG</sequence>
<reference key="1">
    <citation type="journal article" date="2011" name="J. Bacteriol.">
        <title>Genome of Ochrobactrum anthropi ATCC 49188 T, a versatile opportunistic pathogen and symbiont of several eukaryotic hosts.</title>
        <authorList>
            <person name="Chain P.S."/>
            <person name="Lang D.M."/>
            <person name="Comerci D.J."/>
            <person name="Malfatti S.A."/>
            <person name="Vergez L.M."/>
            <person name="Shin M."/>
            <person name="Ugalde R.A."/>
            <person name="Garcia E."/>
            <person name="Tolmasky M.E."/>
        </authorList>
    </citation>
    <scope>NUCLEOTIDE SEQUENCE [LARGE SCALE GENOMIC DNA]</scope>
    <source>
        <strain>ATCC 49188 / DSM 6882 / CCUG 24695 / JCM 21032 / LMG 3331 / NBRC 15819 / NCTC 12168 / Alc 37</strain>
    </source>
</reference>
<evidence type="ECO:0000255" key="1">
    <source>
        <dbReference type="HAMAP-Rule" id="MF_00041"/>
    </source>
</evidence>
<organism>
    <name type="scientific">Brucella anthropi (strain ATCC 49188 / DSM 6882 / CCUG 24695 / JCM 21032 / LMG 3331 / NBRC 15819 / NCTC 12168 / Alc 37)</name>
    <name type="common">Ochrobactrum anthropi</name>
    <dbReference type="NCBI Taxonomy" id="439375"/>
    <lineage>
        <taxon>Bacteria</taxon>
        <taxon>Pseudomonadati</taxon>
        <taxon>Pseudomonadota</taxon>
        <taxon>Alphaproteobacteria</taxon>
        <taxon>Hyphomicrobiales</taxon>
        <taxon>Brucellaceae</taxon>
        <taxon>Brucella/Ochrobactrum group</taxon>
        <taxon>Brucella</taxon>
    </lineage>
</organism>
<protein>
    <recommendedName>
        <fullName evidence="1">Cysteine--tRNA ligase</fullName>
        <ecNumber evidence="1">6.1.1.16</ecNumber>
    </recommendedName>
    <alternativeName>
        <fullName evidence="1">Cysteinyl-tRNA synthetase</fullName>
        <shortName evidence="1">CysRS</shortName>
    </alternativeName>
</protein>
<feature type="chain" id="PRO_0000332862" description="Cysteine--tRNA ligase">
    <location>
        <begin position="1"/>
        <end position="505"/>
    </location>
</feature>
<feature type="short sequence motif" description="'HIGH' region">
    <location>
        <begin position="35"/>
        <end position="45"/>
    </location>
</feature>
<feature type="short sequence motif" description="'KMSKS' region">
    <location>
        <begin position="301"/>
        <end position="305"/>
    </location>
</feature>
<feature type="binding site" evidence="1">
    <location>
        <position position="33"/>
    </location>
    <ligand>
        <name>Zn(2+)</name>
        <dbReference type="ChEBI" id="CHEBI:29105"/>
    </ligand>
</feature>
<feature type="binding site" evidence="1">
    <location>
        <position position="229"/>
    </location>
    <ligand>
        <name>Zn(2+)</name>
        <dbReference type="ChEBI" id="CHEBI:29105"/>
    </ligand>
</feature>
<feature type="binding site" evidence="1">
    <location>
        <position position="268"/>
    </location>
    <ligand>
        <name>Zn(2+)</name>
        <dbReference type="ChEBI" id="CHEBI:29105"/>
    </ligand>
</feature>
<feature type="binding site" evidence="1">
    <location>
        <position position="272"/>
    </location>
    <ligand>
        <name>Zn(2+)</name>
        <dbReference type="ChEBI" id="CHEBI:29105"/>
    </ligand>
</feature>
<feature type="binding site" evidence="1">
    <location>
        <position position="304"/>
    </location>
    <ligand>
        <name>ATP</name>
        <dbReference type="ChEBI" id="CHEBI:30616"/>
    </ligand>
</feature>
<keyword id="KW-0030">Aminoacyl-tRNA synthetase</keyword>
<keyword id="KW-0067">ATP-binding</keyword>
<keyword id="KW-0963">Cytoplasm</keyword>
<keyword id="KW-0436">Ligase</keyword>
<keyword id="KW-0479">Metal-binding</keyword>
<keyword id="KW-0547">Nucleotide-binding</keyword>
<keyword id="KW-0648">Protein biosynthesis</keyword>
<keyword id="KW-1185">Reference proteome</keyword>
<keyword id="KW-0862">Zinc</keyword>
<comment type="catalytic activity">
    <reaction evidence="1">
        <text>tRNA(Cys) + L-cysteine + ATP = L-cysteinyl-tRNA(Cys) + AMP + diphosphate</text>
        <dbReference type="Rhea" id="RHEA:17773"/>
        <dbReference type="Rhea" id="RHEA-COMP:9661"/>
        <dbReference type="Rhea" id="RHEA-COMP:9679"/>
        <dbReference type="ChEBI" id="CHEBI:30616"/>
        <dbReference type="ChEBI" id="CHEBI:33019"/>
        <dbReference type="ChEBI" id="CHEBI:35235"/>
        <dbReference type="ChEBI" id="CHEBI:78442"/>
        <dbReference type="ChEBI" id="CHEBI:78517"/>
        <dbReference type="ChEBI" id="CHEBI:456215"/>
        <dbReference type="EC" id="6.1.1.16"/>
    </reaction>
</comment>
<comment type="cofactor">
    <cofactor evidence="1">
        <name>Zn(2+)</name>
        <dbReference type="ChEBI" id="CHEBI:29105"/>
    </cofactor>
    <text evidence="1">Binds 1 zinc ion per subunit.</text>
</comment>
<comment type="subunit">
    <text evidence="1">Monomer.</text>
</comment>
<comment type="subcellular location">
    <subcellularLocation>
        <location evidence="1">Cytoplasm</location>
    </subcellularLocation>
</comment>
<comment type="similarity">
    <text evidence="1">Belongs to the class-I aminoacyl-tRNA synthetase family.</text>
</comment>
<dbReference type="EC" id="6.1.1.16" evidence="1"/>
<dbReference type="EMBL" id="CP000758">
    <property type="protein sequence ID" value="ABS15324.1"/>
    <property type="molecule type" value="Genomic_DNA"/>
</dbReference>
<dbReference type="RefSeq" id="WP_012092399.1">
    <property type="nucleotide sequence ID" value="NC_009667.1"/>
</dbReference>
<dbReference type="SMR" id="A6X270"/>
<dbReference type="STRING" id="439375.Oant_2611"/>
<dbReference type="KEGG" id="oan:Oant_2611"/>
<dbReference type="PATRIC" id="fig|439375.7.peg.2753"/>
<dbReference type="eggNOG" id="COG0215">
    <property type="taxonomic scope" value="Bacteria"/>
</dbReference>
<dbReference type="HOGENOM" id="CLU_013528_0_1_5"/>
<dbReference type="PhylomeDB" id="A6X270"/>
<dbReference type="Proteomes" id="UP000002301">
    <property type="component" value="Chromosome 1"/>
</dbReference>
<dbReference type="GO" id="GO:0005829">
    <property type="term" value="C:cytosol"/>
    <property type="evidence" value="ECO:0007669"/>
    <property type="project" value="TreeGrafter"/>
</dbReference>
<dbReference type="GO" id="GO:0005524">
    <property type="term" value="F:ATP binding"/>
    <property type="evidence" value="ECO:0007669"/>
    <property type="project" value="UniProtKB-UniRule"/>
</dbReference>
<dbReference type="GO" id="GO:0004817">
    <property type="term" value="F:cysteine-tRNA ligase activity"/>
    <property type="evidence" value="ECO:0007669"/>
    <property type="project" value="UniProtKB-UniRule"/>
</dbReference>
<dbReference type="GO" id="GO:0008270">
    <property type="term" value="F:zinc ion binding"/>
    <property type="evidence" value="ECO:0007669"/>
    <property type="project" value="UniProtKB-UniRule"/>
</dbReference>
<dbReference type="GO" id="GO:0006423">
    <property type="term" value="P:cysteinyl-tRNA aminoacylation"/>
    <property type="evidence" value="ECO:0007669"/>
    <property type="project" value="UniProtKB-UniRule"/>
</dbReference>
<dbReference type="CDD" id="cd00672">
    <property type="entry name" value="CysRS_core"/>
    <property type="match status" value="1"/>
</dbReference>
<dbReference type="Gene3D" id="1.20.120.1910">
    <property type="entry name" value="Cysteine-tRNA ligase, C-terminal anti-codon recognition domain"/>
    <property type="match status" value="1"/>
</dbReference>
<dbReference type="Gene3D" id="3.40.50.620">
    <property type="entry name" value="HUPs"/>
    <property type="match status" value="1"/>
</dbReference>
<dbReference type="HAMAP" id="MF_00041">
    <property type="entry name" value="Cys_tRNA_synth"/>
    <property type="match status" value="1"/>
</dbReference>
<dbReference type="InterPro" id="IPR015803">
    <property type="entry name" value="Cys-tRNA-ligase"/>
</dbReference>
<dbReference type="InterPro" id="IPR024909">
    <property type="entry name" value="Cys-tRNA/MSH_ligase"/>
</dbReference>
<dbReference type="InterPro" id="IPR014729">
    <property type="entry name" value="Rossmann-like_a/b/a_fold"/>
</dbReference>
<dbReference type="InterPro" id="IPR032678">
    <property type="entry name" value="tRNA-synt_1_cat_dom"/>
</dbReference>
<dbReference type="InterPro" id="IPR009080">
    <property type="entry name" value="tRNAsynth_Ia_anticodon-bd"/>
</dbReference>
<dbReference type="NCBIfam" id="TIGR00435">
    <property type="entry name" value="cysS"/>
    <property type="match status" value="1"/>
</dbReference>
<dbReference type="PANTHER" id="PTHR10890:SF3">
    <property type="entry name" value="CYSTEINE--TRNA LIGASE, CYTOPLASMIC"/>
    <property type="match status" value="1"/>
</dbReference>
<dbReference type="PANTHER" id="PTHR10890">
    <property type="entry name" value="CYSTEINYL-TRNA SYNTHETASE"/>
    <property type="match status" value="1"/>
</dbReference>
<dbReference type="Pfam" id="PF01406">
    <property type="entry name" value="tRNA-synt_1e"/>
    <property type="match status" value="1"/>
</dbReference>
<dbReference type="PRINTS" id="PR00983">
    <property type="entry name" value="TRNASYNTHCYS"/>
</dbReference>
<dbReference type="SUPFAM" id="SSF47323">
    <property type="entry name" value="Anticodon-binding domain of a subclass of class I aminoacyl-tRNA synthetases"/>
    <property type="match status" value="1"/>
</dbReference>
<dbReference type="SUPFAM" id="SSF52374">
    <property type="entry name" value="Nucleotidylyl transferase"/>
    <property type="match status" value="1"/>
</dbReference>